<reference key="1">
    <citation type="journal article" date="1990" name="Virology">
        <title>The complete DNA sequence of vaccinia virus.</title>
        <authorList>
            <person name="Goebel S.J."/>
            <person name="Johnson G.P."/>
            <person name="Perkus M.E."/>
            <person name="Davis S.W."/>
            <person name="Winslow J.P."/>
            <person name="Paoletti E."/>
        </authorList>
    </citation>
    <scope>NUCLEOTIDE SEQUENCE [LARGE SCALE GENOMIC DNA]</scope>
</reference>
<reference key="2">
    <citation type="journal article" date="1990" name="Virology">
        <title>Appendix to 'The complete DNA sequence of vaccinia virus'.</title>
        <authorList>
            <person name="Goebel S.J."/>
            <person name="Johnson G.P."/>
            <person name="Perkus M.E."/>
            <person name="Davis S.W."/>
            <person name="Winslow J.P."/>
            <person name="Paoletti E."/>
        </authorList>
    </citation>
    <scope>COMPLETE GENOME</scope>
</reference>
<dbReference type="EMBL" id="M35027">
    <property type="protein sequence ID" value="AAA48099.1"/>
    <property type="molecule type" value="Genomic_DNA"/>
</dbReference>
<dbReference type="PIR" id="B42515">
    <property type="entry name" value="QQVZCG"/>
</dbReference>
<dbReference type="Proteomes" id="UP000008269">
    <property type="component" value="Segment"/>
</dbReference>
<dbReference type="GO" id="GO:0044423">
    <property type="term" value="C:virion component"/>
    <property type="evidence" value="ECO:0007669"/>
    <property type="project" value="UniProtKB-KW"/>
</dbReference>
<dbReference type="InterPro" id="IPR007660">
    <property type="entry name" value="Poxvirus_D3"/>
</dbReference>
<dbReference type="Pfam" id="PF04580">
    <property type="entry name" value="Pox_D3"/>
    <property type="match status" value="1"/>
</dbReference>
<name>PG115_VACCC</name>
<proteinExistence type="evidence at transcript level"/>
<gene>
    <name type="primary">OPG115</name>
    <name type="ORF">D3R</name>
</gene>
<comment type="function">
    <text evidence="1">Late protein which is part of a large complex required for early virion morphogenesis. This complex participates in the formation of virosomes and the incorporation of virosomal contents into nascent immature virions.</text>
</comment>
<comment type="subunit">
    <text evidence="1">Part of a complex composed of the kinase OPG054, OPG092, OPG100, OPG114, OPG115, OPG142 and OPG157.</text>
</comment>
<comment type="subcellular location">
    <subcellularLocation>
        <location evidence="1">Virion</location>
    </subcellularLocation>
    <text evidence="1">Localizes to the virion core.</text>
</comment>
<comment type="induction">
    <text>Expressed in the late phase of the viral replicative cycle.</text>
</comment>
<comment type="similarity">
    <text evidence="2">Belongs to the orthopoxvirus OPG115 family.</text>
</comment>
<organism>
    <name type="scientific">Vaccinia virus (strain Copenhagen)</name>
    <name type="common">VACV</name>
    <dbReference type="NCBI Taxonomy" id="10249"/>
    <lineage>
        <taxon>Viruses</taxon>
        <taxon>Varidnaviria</taxon>
        <taxon>Bamfordvirae</taxon>
        <taxon>Nucleocytoviricota</taxon>
        <taxon>Pokkesviricetes</taxon>
        <taxon>Chitovirales</taxon>
        <taxon>Poxviridae</taxon>
        <taxon>Chordopoxvirinae</taxon>
        <taxon>Orthopoxvirus</taxon>
        <taxon>Vaccinia virus</taxon>
    </lineage>
</organism>
<sequence length="237" mass="27974">MDIFIVKDNKYPKVDNDDNEVFILLGNHNDFIRLKLTKLKEHVFFSEYIVTPDTYGSLCVELNGSSFQHGGRYIEVEEFIDAGRQVRWCSTSNHISEDIPEDIHTDKFVIYDIYTFDAFKNKRLVFVQVPPSLGDDSHLTNPLLSPYYRNSVARQMVNDMIFNQDSFLKYLLEHLIRSHYRVSKHITIVRYKDTEELNLTRICYNRDKFKAFVFAWFNGVSENEKVLDTYKKVSNLI</sequence>
<accession>P21009</accession>
<protein>
    <recommendedName>
        <fullName>Core protein OPG115</fullName>
    </recommendedName>
    <alternativeName>
        <fullName>27 kDa virion core protein</fullName>
    </alternativeName>
</protein>
<evidence type="ECO:0000250" key="1">
    <source>
        <dbReference type="UniProtKB" id="P04302"/>
    </source>
</evidence>
<evidence type="ECO:0000305" key="2"/>
<feature type="chain" id="PRO_0000099428" description="Core protein OPG115">
    <location>
        <begin position="1"/>
        <end position="237"/>
    </location>
</feature>
<organismHost>
    <name type="scientific">Homo sapiens</name>
    <name type="common">Human</name>
    <dbReference type="NCBI Taxonomy" id="9606"/>
</organismHost>
<keyword id="KW-0426">Late protein</keyword>
<keyword id="KW-1185">Reference proteome</keyword>
<keyword id="KW-0946">Virion</keyword>